<protein>
    <recommendedName>
        <fullName>UDP-glycosyltransferase 87A2</fullName>
        <ecNumber>2.4.1.-</ecNumber>
    </recommendedName>
</protein>
<evidence type="ECO:0000250" key="1"/>
<evidence type="ECO:0000305" key="2"/>
<evidence type="ECO:0007744" key="3">
    <source>
    </source>
</evidence>
<reference key="1">
    <citation type="journal article" date="1999" name="Nature">
        <title>Sequence and analysis of chromosome 2 of the plant Arabidopsis thaliana.</title>
        <authorList>
            <person name="Lin X."/>
            <person name="Kaul S."/>
            <person name="Rounsley S.D."/>
            <person name="Shea T.P."/>
            <person name="Benito M.-I."/>
            <person name="Town C.D."/>
            <person name="Fujii C.Y."/>
            <person name="Mason T.M."/>
            <person name="Bowman C.L."/>
            <person name="Barnstead M.E."/>
            <person name="Feldblyum T.V."/>
            <person name="Buell C.R."/>
            <person name="Ketchum K.A."/>
            <person name="Lee J.J."/>
            <person name="Ronning C.M."/>
            <person name="Koo H.L."/>
            <person name="Moffat K.S."/>
            <person name="Cronin L.A."/>
            <person name="Shen M."/>
            <person name="Pai G."/>
            <person name="Van Aken S."/>
            <person name="Umayam L."/>
            <person name="Tallon L.J."/>
            <person name="Gill J.E."/>
            <person name="Adams M.D."/>
            <person name="Carrera A.J."/>
            <person name="Creasy T.H."/>
            <person name="Goodman H.M."/>
            <person name="Somerville C.R."/>
            <person name="Copenhaver G.P."/>
            <person name="Preuss D."/>
            <person name="Nierman W.C."/>
            <person name="White O."/>
            <person name="Eisen J.A."/>
            <person name="Salzberg S.L."/>
            <person name="Fraser C.M."/>
            <person name="Venter J.C."/>
        </authorList>
    </citation>
    <scope>NUCLEOTIDE SEQUENCE [LARGE SCALE GENOMIC DNA]</scope>
    <source>
        <strain>cv. Columbia</strain>
    </source>
</reference>
<reference key="2">
    <citation type="journal article" date="2017" name="Plant J.">
        <title>Araport11: a complete reannotation of the Arabidopsis thaliana reference genome.</title>
        <authorList>
            <person name="Cheng C.Y."/>
            <person name="Krishnakumar V."/>
            <person name="Chan A.P."/>
            <person name="Thibaud-Nissen F."/>
            <person name="Schobel S."/>
            <person name="Town C.D."/>
        </authorList>
    </citation>
    <scope>GENOME REANNOTATION</scope>
    <source>
        <strain>cv. Columbia</strain>
    </source>
</reference>
<reference key="3">
    <citation type="journal article" date="2003" name="Science">
        <title>Empirical analysis of transcriptional activity in the Arabidopsis genome.</title>
        <authorList>
            <person name="Yamada K."/>
            <person name="Lim J."/>
            <person name="Dale J.M."/>
            <person name="Chen H."/>
            <person name="Shinn P."/>
            <person name="Palm C.J."/>
            <person name="Southwick A.M."/>
            <person name="Wu H.C."/>
            <person name="Kim C.J."/>
            <person name="Nguyen M."/>
            <person name="Pham P.K."/>
            <person name="Cheuk R.F."/>
            <person name="Karlin-Newmann G."/>
            <person name="Liu S.X."/>
            <person name="Lam B."/>
            <person name="Sakano H."/>
            <person name="Wu T."/>
            <person name="Yu G."/>
            <person name="Miranda M."/>
            <person name="Quach H.L."/>
            <person name="Tripp M."/>
            <person name="Chang C.H."/>
            <person name="Lee J.M."/>
            <person name="Toriumi M.J."/>
            <person name="Chan M.M."/>
            <person name="Tang C.C."/>
            <person name="Onodera C.S."/>
            <person name="Deng J.M."/>
            <person name="Akiyama K."/>
            <person name="Ansari Y."/>
            <person name="Arakawa T."/>
            <person name="Banh J."/>
            <person name="Banno F."/>
            <person name="Bowser L."/>
            <person name="Brooks S.Y."/>
            <person name="Carninci P."/>
            <person name="Chao Q."/>
            <person name="Choy N."/>
            <person name="Enju A."/>
            <person name="Goldsmith A.D."/>
            <person name="Gurjal M."/>
            <person name="Hansen N.F."/>
            <person name="Hayashizaki Y."/>
            <person name="Johnson-Hopson C."/>
            <person name="Hsuan V.W."/>
            <person name="Iida K."/>
            <person name="Karnes M."/>
            <person name="Khan S."/>
            <person name="Koesema E."/>
            <person name="Ishida J."/>
            <person name="Jiang P.X."/>
            <person name="Jones T."/>
            <person name="Kawai J."/>
            <person name="Kamiya A."/>
            <person name="Meyers C."/>
            <person name="Nakajima M."/>
            <person name="Narusaka M."/>
            <person name="Seki M."/>
            <person name="Sakurai T."/>
            <person name="Satou M."/>
            <person name="Tamse R."/>
            <person name="Vaysberg M."/>
            <person name="Wallender E.K."/>
            <person name="Wong C."/>
            <person name="Yamamura Y."/>
            <person name="Yuan S."/>
            <person name="Shinozaki K."/>
            <person name="Davis R.W."/>
            <person name="Theologis A."/>
            <person name="Ecker J.R."/>
        </authorList>
    </citation>
    <scope>NUCLEOTIDE SEQUENCE [LARGE SCALE MRNA] (ISOFORM 1)</scope>
    <source>
        <strain>cv. Columbia</strain>
    </source>
</reference>
<reference key="4">
    <citation type="submission" date="2006-07" db="EMBL/GenBank/DDBJ databases">
        <title>Large-scale analysis of RIKEN Arabidopsis full-length (RAFL) cDNAs.</title>
        <authorList>
            <person name="Totoki Y."/>
            <person name="Seki M."/>
            <person name="Ishida J."/>
            <person name="Nakajima M."/>
            <person name="Enju A."/>
            <person name="Kamiya A."/>
            <person name="Narusaka M."/>
            <person name="Shin-i T."/>
            <person name="Nakagawa M."/>
            <person name="Sakamoto N."/>
            <person name="Oishi K."/>
            <person name="Kohara Y."/>
            <person name="Kobayashi M."/>
            <person name="Toyoda A."/>
            <person name="Sakaki Y."/>
            <person name="Sakurai T."/>
            <person name="Iida K."/>
            <person name="Akiyama K."/>
            <person name="Satou M."/>
            <person name="Toyoda T."/>
            <person name="Konagaya A."/>
            <person name="Carninci P."/>
            <person name="Kawai J."/>
            <person name="Hayashizaki Y."/>
            <person name="Shinozaki K."/>
        </authorList>
    </citation>
    <scope>NUCLEOTIDE SEQUENCE [LARGE SCALE MRNA] (ISOFORM 1)</scope>
    <source>
        <strain>cv. Columbia</strain>
    </source>
</reference>
<reference key="5">
    <citation type="journal article" date="2001" name="J. Biol. Chem.">
        <title>Phylogenetic analysis of the UDP-glycosyltransferase multigene family of Arabidopsis thaliana.</title>
        <authorList>
            <person name="Li Y."/>
            <person name="Baldauf S."/>
            <person name="Lim E.K."/>
            <person name="Bowles D.J."/>
        </authorList>
    </citation>
    <scope>GENE FAMILY</scope>
</reference>
<reference key="6">
    <citation type="journal article" date="2012" name="Mol. Cell. Proteomics">
        <title>Comparative large-scale characterisation of plant vs. mammal proteins reveals similar and idiosyncratic N-alpha acetylation features.</title>
        <authorList>
            <person name="Bienvenut W.V."/>
            <person name="Sumpton D."/>
            <person name="Martinez A."/>
            <person name="Lilla S."/>
            <person name="Espagne C."/>
            <person name="Meinnel T."/>
            <person name="Giglione C."/>
        </authorList>
    </citation>
    <scope>ACETYLATION [LARGE SCALE ANALYSIS] AT MET-1</scope>
    <scope>IDENTIFICATION BY MASS SPECTROMETRY [LARGE SCALE ANALYSIS]</scope>
</reference>
<comment type="alternative products">
    <event type="alternative splicing"/>
    <isoform>
        <id>O64733-1</id>
        <name>1</name>
        <sequence type="displayed"/>
    </isoform>
    <isoform>
        <id>O64733-2</id>
        <name>2</name>
        <sequence type="described" ref="VSP_041232"/>
    </isoform>
</comment>
<comment type="similarity">
    <text evidence="2">Belongs to the UDP-glycosyltransferase family.</text>
</comment>
<proteinExistence type="evidence at protein level"/>
<name>U87A2_ARATH</name>
<gene>
    <name type="primary">UGT87A2</name>
    <name type="ordered locus">At2g30140</name>
    <name type="ORF">T27E13.12</name>
</gene>
<organism>
    <name type="scientific">Arabidopsis thaliana</name>
    <name type="common">Mouse-ear cress</name>
    <dbReference type="NCBI Taxonomy" id="3702"/>
    <lineage>
        <taxon>Eukaryota</taxon>
        <taxon>Viridiplantae</taxon>
        <taxon>Streptophyta</taxon>
        <taxon>Embryophyta</taxon>
        <taxon>Tracheophyta</taxon>
        <taxon>Spermatophyta</taxon>
        <taxon>Magnoliopsida</taxon>
        <taxon>eudicotyledons</taxon>
        <taxon>Gunneridae</taxon>
        <taxon>Pentapetalae</taxon>
        <taxon>rosids</taxon>
        <taxon>malvids</taxon>
        <taxon>Brassicales</taxon>
        <taxon>Brassicaceae</taxon>
        <taxon>Camelineae</taxon>
        <taxon>Arabidopsis</taxon>
    </lineage>
</organism>
<sequence>MDPNESPPNQFRHVVAMPYPGRGHINPMMNLCKRLVRRYPNLHVTFVVTEEWLGFIGPDPKPDRIHFSTLPNLIPSELVRAKDFIGFIDAVYTRLEEPFEKLLDSLNSPPPSVIFADTYVIWAVRVGRKRNIPVVSLWTMSATILSFFLHSDLLISHGHALFEPSEEEVVDYVPGLSPTKLRDLPPIFDGYSDRVFKTAKLCFDELPGARSLLFTTAYELEHKAIDAFTSKLDIPVYAIGPLIPFEELSVQNDNKEPNYIQWLEEQPEGSVLYISQGSFLSVSEAQMEEIVKGLRESGVRFLWVARGGELKLKEALEGSLGVVVSWCDQLRVLCHKAVGGFWTHCGFNSTLEGIYSGVPMLAFPLFWDQILNAKMIVEDWRVGMRIERTKKNELLIGREEIKEVVKRFMDRESEEGKEMRRRACDLSEISRGAVAKSGSSNVNIDEFVRHITNTN</sequence>
<feature type="chain" id="PRO_0000409134" description="UDP-glycosyltransferase 87A2">
    <location>
        <begin position="1"/>
        <end position="455"/>
    </location>
</feature>
<feature type="binding site" evidence="1">
    <location>
        <position position="278"/>
    </location>
    <ligand>
        <name>UDP-alpha-D-glucose</name>
        <dbReference type="ChEBI" id="CHEBI:58885"/>
    </ligand>
</feature>
<feature type="binding site" evidence="1">
    <location>
        <begin position="327"/>
        <end position="329"/>
    </location>
    <ligand>
        <name>UDP-alpha-D-glucose</name>
        <dbReference type="ChEBI" id="CHEBI:58885"/>
    </ligand>
</feature>
<feature type="binding site" evidence="1">
    <location>
        <begin position="344"/>
        <end position="352"/>
    </location>
    <ligand>
        <name>UDP-alpha-D-glucose</name>
        <dbReference type="ChEBI" id="CHEBI:58885"/>
    </ligand>
</feature>
<feature type="binding site" evidence="1">
    <location>
        <begin position="366"/>
        <end position="369"/>
    </location>
    <ligand>
        <name>UDP-alpha-D-glucose</name>
        <dbReference type="ChEBI" id="CHEBI:58885"/>
    </ligand>
</feature>
<feature type="modified residue" description="N-acetylmethionine" evidence="3">
    <location>
        <position position="1"/>
    </location>
</feature>
<feature type="splice variant" id="VSP_041232" description="In isoform 2." evidence="2">
    <location>
        <position position="166"/>
    </location>
</feature>
<keyword id="KW-0007">Acetylation</keyword>
<keyword id="KW-0025">Alternative splicing</keyword>
<keyword id="KW-0328">Glycosyltransferase</keyword>
<keyword id="KW-1185">Reference proteome</keyword>
<keyword id="KW-0808">Transferase</keyword>
<dbReference type="EC" id="2.4.1.-"/>
<dbReference type="EMBL" id="AC004165">
    <property type="protein sequence ID" value="AAC16958.1"/>
    <property type="molecule type" value="Genomic_DNA"/>
</dbReference>
<dbReference type="EMBL" id="CP002685">
    <property type="protein sequence ID" value="AEC08350.1"/>
    <property type="molecule type" value="Genomic_DNA"/>
</dbReference>
<dbReference type="EMBL" id="CP002685">
    <property type="protein sequence ID" value="AEC08351.1"/>
    <property type="molecule type" value="Genomic_DNA"/>
</dbReference>
<dbReference type="EMBL" id="AY093176">
    <property type="protein sequence ID" value="AAM13175.1"/>
    <property type="molecule type" value="mRNA"/>
</dbReference>
<dbReference type="EMBL" id="BT006597">
    <property type="protein sequence ID" value="AAP31941.1"/>
    <property type="molecule type" value="mRNA"/>
</dbReference>
<dbReference type="EMBL" id="AK226350">
    <property type="protein sequence ID" value="BAE98498.1"/>
    <property type="molecule type" value="mRNA"/>
</dbReference>
<dbReference type="PIR" id="T00584">
    <property type="entry name" value="T00584"/>
</dbReference>
<dbReference type="RefSeq" id="NP_001077979.1">
    <molecule id="O64733-2"/>
    <property type="nucleotide sequence ID" value="NM_001084510.1"/>
</dbReference>
<dbReference type="RefSeq" id="NP_180575.1">
    <molecule id="O64733-1"/>
    <property type="nucleotide sequence ID" value="NM_128569.4"/>
</dbReference>
<dbReference type="SMR" id="O64733"/>
<dbReference type="BioGRID" id="2915">
    <property type="interactions" value="1"/>
</dbReference>
<dbReference type="FunCoup" id="O64733">
    <property type="interactions" value="28"/>
</dbReference>
<dbReference type="STRING" id="3702.O64733"/>
<dbReference type="CAZy" id="GT1">
    <property type="family name" value="Glycosyltransferase Family 1"/>
</dbReference>
<dbReference type="iPTMnet" id="O64733"/>
<dbReference type="PaxDb" id="3702-AT2G30140.1"/>
<dbReference type="ProteomicsDB" id="228651">
    <molecule id="O64733-1"/>
</dbReference>
<dbReference type="EnsemblPlants" id="AT2G30140.1">
    <molecule id="O64733-1"/>
    <property type="protein sequence ID" value="AT2G30140.1"/>
    <property type="gene ID" value="AT2G30140"/>
</dbReference>
<dbReference type="EnsemblPlants" id="AT2G30140.2">
    <molecule id="O64733-2"/>
    <property type="protein sequence ID" value="AT2G30140.2"/>
    <property type="gene ID" value="AT2G30140"/>
</dbReference>
<dbReference type="GeneID" id="817566"/>
<dbReference type="Gramene" id="AT2G30140.1">
    <molecule id="O64733-1"/>
    <property type="protein sequence ID" value="AT2G30140.1"/>
    <property type="gene ID" value="AT2G30140"/>
</dbReference>
<dbReference type="Gramene" id="AT2G30140.2">
    <molecule id="O64733-2"/>
    <property type="protein sequence ID" value="AT2G30140.2"/>
    <property type="gene ID" value="AT2G30140"/>
</dbReference>
<dbReference type="KEGG" id="ath:AT2G30140"/>
<dbReference type="Araport" id="AT2G30140"/>
<dbReference type="TAIR" id="AT2G30140">
    <property type="gene designation" value="UGT87A2"/>
</dbReference>
<dbReference type="eggNOG" id="KOG1192">
    <property type="taxonomic scope" value="Eukaryota"/>
</dbReference>
<dbReference type="InParanoid" id="O64733"/>
<dbReference type="OMA" id="IFWDQMP"/>
<dbReference type="PhylomeDB" id="O64733"/>
<dbReference type="PRO" id="PR:O64733"/>
<dbReference type="Proteomes" id="UP000006548">
    <property type="component" value="Chromosome 2"/>
</dbReference>
<dbReference type="ExpressionAtlas" id="O64733">
    <property type="expression patterns" value="baseline and differential"/>
</dbReference>
<dbReference type="GO" id="GO:0005737">
    <property type="term" value="C:cytoplasm"/>
    <property type="evidence" value="ECO:0000314"/>
    <property type="project" value="TAIR"/>
</dbReference>
<dbReference type="GO" id="GO:0005829">
    <property type="term" value="C:cytosol"/>
    <property type="evidence" value="ECO:0007005"/>
    <property type="project" value="TAIR"/>
</dbReference>
<dbReference type="GO" id="GO:0005634">
    <property type="term" value="C:nucleus"/>
    <property type="evidence" value="ECO:0000314"/>
    <property type="project" value="TAIR"/>
</dbReference>
<dbReference type="GO" id="GO:0008194">
    <property type="term" value="F:UDP-glycosyltransferase activity"/>
    <property type="evidence" value="ECO:0007669"/>
    <property type="project" value="InterPro"/>
</dbReference>
<dbReference type="GO" id="GO:0009909">
    <property type="term" value="P:regulation of flower development"/>
    <property type="evidence" value="ECO:0000315"/>
    <property type="project" value="TAIR"/>
</dbReference>
<dbReference type="CDD" id="cd03784">
    <property type="entry name" value="GT1_Gtf-like"/>
    <property type="match status" value="1"/>
</dbReference>
<dbReference type="FunFam" id="3.40.50.2000:FF:000060">
    <property type="entry name" value="Glycosyltransferase"/>
    <property type="match status" value="1"/>
</dbReference>
<dbReference type="FunFam" id="3.40.50.2000:FF:000152">
    <property type="entry name" value="Glycosyltransferase"/>
    <property type="match status" value="1"/>
</dbReference>
<dbReference type="Gene3D" id="3.40.50.2000">
    <property type="entry name" value="Glycogen Phosphorylase B"/>
    <property type="match status" value="2"/>
</dbReference>
<dbReference type="InterPro" id="IPR002213">
    <property type="entry name" value="UDP_glucos_trans"/>
</dbReference>
<dbReference type="PANTHER" id="PTHR11926">
    <property type="entry name" value="GLUCOSYL/GLUCURONOSYL TRANSFERASES"/>
    <property type="match status" value="1"/>
</dbReference>
<dbReference type="PANTHER" id="PTHR11926:SF774">
    <property type="entry name" value="UDP-GLYCOSYLTRANSFERASE 85A1-RELATED"/>
    <property type="match status" value="1"/>
</dbReference>
<dbReference type="Pfam" id="PF00201">
    <property type="entry name" value="UDPGT"/>
    <property type="match status" value="1"/>
</dbReference>
<dbReference type="SUPFAM" id="SSF53756">
    <property type="entry name" value="UDP-Glycosyltransferase/glycogen phosphorylase"/>
    <property type="match status" value="1"/>
</dbReference>
<accession>O64733</accession>
<accession>A8MS44</accession>